<organism>
    <name type="scientific">Caenorhabditis elegans</name>
    <dbReference type="NCBI Taxonomy" id="6239"/>
    <lineage>
        <taxon>Eukaryota</taxon>
        <taxon>Metazoa</taxon>
        <taxon>Ecdysozoa</taxon>
        <taxon>Nematoda</taxon>
        <taxon>Chromadorea</taxon>
        <taxon>Rhabditida</taxon>
        <taxon>Rhabditina</taxon>
        <taxon>Rhabditomorpha</taxon>
        <taxon>Rhabditoidea</taxon>
        <taxon>Rhabditidae</taxon>
        <taxon>Peloderinae</taxon>
        <taxon>Caenorhabditis</taxon>
    </lineage>
</organism>
<proteinExistence type="evidence at transcript level"/>
<accession>Q09541</accession>
<reference key="1">
    <citation type="journal article" date="1998" name="Science">
        <title>Genome sequence of the nematode C. elegans: a platform for investigating biology.</title>
        <authorList>
            <consortium name="The C. elegans sequencing consortium"/>
        </authorList>
    </citation>
    <scope>NUCLEOTIDE SEQUENCE [LARGE SCALE GENOMIC DNA]</scope>
    <source>
        <strain>Bristol N2</strain>
    </source>
</reference>
<reference key="2">
    <citation type="journal article" date="2007" name="EMBO Rep.">
        <title>Tripeptidyl peptidase II promotes fat formation in a conserved fashion.</title>
        <authorList>
            <person name="McKay R.M."/>
            <person name="McKay J.P."/>
            <person name="Suh J.M."/>
            <person name="Avery L."/>
            <person name="Graff J.M."/>
        </authorList>
    </citation>
    <scope>FUNCTION</scope>
    <scope>TISSUE SPECIFICITY</scope>
    <scope>DISRUPTION PHENOTYPE</scope>
</reference>
<sequence length="1374" mass="151089">MIVIRNWQRISYLSFCRFSTRSLSIQQFQKTPLLLVVRQQGSARLKMTSSPPEIVPQQPLDALLLNKTDTEQEIFLTKYPNYDGRDILIAILDTGVDPSLPGMQVTTTGERKMFDVIDCSGAGDVDTSITRTVKDGVIEGISGRKLAIPEKWKCPTGQYHVGLKPIFELYTKGVKSRVISERKEDVVGPSHNIAASEALKQLTEHEKVVGGTSEKTSDKWAREDFACKVDFLKSMASVADVGPVADVVTWHDGEMWRVCIDTSFRGRLGLGNVLGTFRETGDYAYLTNKDSVVYTVRVSPDGNLTEIVVPSGAHGSHVAGIAAANYPDNPQKNGLAPGAKILSLNIGDHRLGAMETGQAMTRAFNMCAELNVDIINMSFGEGTHLPDVGRVIEEARRLINRRGVIYVCSAGNQGPALSTVGAPGGTTTGVIGIGAYLTSESADTLYGVYKPVESSIYPWSSRGPCQDGKLGVSLVAPAAAFAGVPQYCRQSMQMMNGTSMSSPNAAGNVACMLSGLKQNNLKWTPYTVRMALENTAYMLPHIESFSQGQGMIKIATAYEKLSEILVNKVFPPRLTHFEINVSNHCKKSKGVYVREPNWNGPQEFTIGVEPIFQNHLSDNNLPAISFEKQIILQSTAPWVSHPQTMFVVAQERTMVVTVDASKAPKGANYTEIVGIDTADPSLGPIFRIPVTVINPEKVAVDQYTSRLVGKSGVTERRFVEVPSWATSAKITLRSTNKDEMDRFTLHTVYIEDDKCSRNTETQKIQGPIGNEWSKSITVQGGKTLEACVVRAWSRGKNPVDVDMTIDFFGVKKPTSISLIHGATNTPIRFQAAPTKSIDVSPSISLKSLVVSLKPQSAKVEPLGPRDMFLTSGLQINRLLLTYQLKVQKPSEVQLQLAGLTPYLYESPVDCVLFQIFGANKSFVGASSSYPDRWTQKLEKGDYTIQAQIRYPDDQVLQGMKELPLLVHVKLGNKISVDLAASASDATLGKECKFAGKALLPNQEMTVYAMNIADDKLPKTIVPTSGSFLAGTFSALKDSDLSDVDKSEVIYFLSEYSTRPTKGLSMVTTKKDTNQNQEMTDAIRDLEVSWVQKLTDEKAAKEFFEACLQKYPDHLPLLQNRVKQLMQAKLVDQTPENVQKIIELCGQILQITKPNETLQFSSVKQEHDDDLLTVDKWLALTGGSEDQRKDVVKLISQFEERKKSIILALQALSSLEQDIEVRKSKFDVPASLRFGGITPLIFGGKQGEVINKKSEGYEALKSKSEQIDATVSEELKKLDSNWTGNQFYVKLLVWLSADDTKTALISAKHAAALGQFGRCAKLLNKAGDELKSSATDSQAVDTSLAEVCESLEWNHLATHFKNSALIKNRTSYRLF</sequence>
<gene>
    <name type="primary">tpp-2</name>
    <name type="ORF">F21H12.6</name>
</gene>
<name>TPP2_CAEEL</name>
<dbReference type="EC" id="3.4.14.10" evidence="2"/>
<dbReference type="EMBL" id="FO080717">
    <property type="protein sequence ID" value="CCD66120.1"/>
    <property type="molecule type" value="Genomic_DNA"/>
</dbReference>
<dbReference type="PIR" id="T16129">
    <property type="entry name" value="T16129"/>
</dbReference>
<dbReference type="RefSeq" id="NP_495221.1">
    <property type="nucleotide sequence ID" value="NM_062820.5"/>
</dbReference>
<dbReference type="SMR" id="Q09541"/>
<dbReference type="BioGRID" id="39359">
    <property type="interactions" value="10"/>
</dbReference>
<dbReference type="FunCoup" id="Q09541">
    <property type="interactions" value="3497"/>
</dbReference>
<dbReference type="STRING" id="6239.F21H12.6.1"/>
<dbReference type="MEROPS" id="S08.A56"/>
<dbReference type="PaxDb" id="6239-F21H12.6"/>
<dbReference type="PeptideAtlas" id="Q09541"/>
<dbReference type="EnsemblMetazoa" id="F21H12.6.1">
    <property type="protein sequence ID" value="F21H12.6.1"/>
    <property type="gene ID" value="WBGene00017686"/>
</dbReference>
<dbReference type="GeneID" id="174018"/>
<dbReference type="KEGG" id="cel:CELE_F21H12.6"/>
<dbReference type="UCSC" id="F21H12.6">
    <property type="organism name" value="c. elegans"/>
</dbReference>
<dbReference type="AGR" id="WB:WBGene00017686"/>
<dbReference type="CTD" id="174018"/>
<dbReference type="WormBase" id="F21H12.6">
    <property type="protein sequence ID" value="CE01917"/>
    <property type="gene ID" value="WBGene00017686"/>
    <property type="gene designation" value="tpp-2"/>
</dbReference>
<dbReference type="eggNOG" id="KOG1114">
    <property type="taxonomic scope" value="Eukaryota"/>
</dbReference>
<dbReference type="GeneTree" id="ENSGT00390000014623"/>
<dbReference type="HOGENOM" id="CLU_003084_1_0_1"/>
<dbReference type="InParanoid" id="Q09541"/>
<dbReference type="OMA" id="SLRDFQC"/>
<dbReference type="OrthoDB" id="10256524at2759"/>
<dbReference type="PhylomeDB" id="Q09541"/>
<dbReference type="Reactome" id="R-CEL-983168">
    <property type="pathway name" value="Antigen processing: Ubiquitination &amp; Proteasome degradation"/>
</dbReference>
<dbReference type="PRO" id="PR:Q09541"/>
<dbReference type="Proteomes" id="UP000001940">
    <property type="component" value="Chromosome II"/>
</dbReference>
<dbReference type="Bgee" id="WBGene00017686">
    <property type="expression patterns" value="Expressed in germ line (C elegans) and 4 other cell types or tissues"/>
</dbReference>
<dbReference type="GO" id="GO:0005829">
    <property type="term" value="C:cytosol"/>
    <property type="evidence" value="ECO:0000318"/>
    <property type="project" value="GO_Central"/>
</dbReference>
<dbReference type="GO" id="GO:0004177">
    <property type="term" value="F:aminopeptidase activity"/>
    <property type="evidence" value="ECO:0007669"/>
    <property type="project" value="UniProtKB-KW"/>
</dbReference>
<dbReference type="GO" id="GO:0004252">
    <property type="term" value="F:serine-type endopeptidase activity"/>
    <property type="evidence" value="ECO:0007669"/>
    <property type="project" value="InterPro"/>
</dbReference>
<dbReference type="GO" id="GO:0008240">
    <property type="term" value="F:tripeptidyl-peptidase activity"/>
    <property type="evidence" value="ECO:0000318"/>
    <property type="project" value="GO_Central"/>
</dbReference>
<dbReference type="GO" id="GO:0010884">
    <property type="term" value="P:positive regulation of lipid storage"/>
    <property type="evidence" value="ECO:0000315"/>
    <property type="project" value="UniProtKB"/>
</dbReference>
<dbReference type="GO" id="GO:0006508">
    <property type="term" value="P:proteolysis"/>
    <property type="evidence" value="ECO:0007669"/>
    <property type="project" value="UniProtKB-KW"/>
</dbReference>
<dbReference type="CDD" id="cd04857">
    <property type="entry name" value="Peptidases_S8_Tripeptidyl_Aminopeptidase_II"/>
    <property type="match status" value="1"/>
</dbReference>
<dbReference type="FunFam" id="3.40.50.200:FF:000003">
    <property type="entry name" value="Tripeptidyl peptidase 2"/>
    <property type="match status" value="1"/>
</dbReference>
<dbReference type="FunFam" id="1.25.40.710:FF:000007">
    <property type="entry name" value="Tripeptidyl-peptidase 2"/>
    <property type="match status" value="1"/>
</dbReference>
<dbReference type="Gene3D" id="1.25.40.710">
    <property type="match status" value="1"/>
</dbReference>
<dbReference type="Gene3D" id="2.20.25.690">
    <property type="match status" value="1"/>
</dbReference>
<dbReference type="Gene3D" id="2.60.40.3170">
    <property type="match status" value="1"/>
</dbReference>
<dbReference type="Gene3D" id="3.40.50.200">
    <property type="entry name" value="Peptidase S8/S53 domain"/>
    <property type="match status" value="1"/>
</dbReference>
<dbReference type="InterPro" id="IPR000209">
    <property type="entry name" value="Peptidase_S8/S53_dom"/>
</dbReference>
<dbReference type="InterPro" id="IPR036852">
    <property type="entry name" value="Peptidase_S8/S53_dom_sf"/>
</dbReference>
<dbReference type="InterPro" id="IPR022398">
    <property type="entry name" value="Peptidase_S8_His-AS"/>
</dbReference>
<dbReference type="InterPro" id="IPR023828">
    <property type="entry name" value="Peptidase_S8_Ser-AS"/>
</dbReference>
<dbReference type="InterPro" id="IPR050131">
    <property type="entry name" value="Peptidase_S8_subtilisin-like"/>
</dbReference>
<dbReference type="InterPro" id="IPR015500">
    <property type="entry name" value="Peptidase_S8_subtilisin-rel"/>
</dbReference>
<dbReference type="InterPro" id="IPR034051">
    <property type="entry name" value="TPP_II_domain"/>
</dbReference>
<dbReference type="InterPro" id="IPR022232">
    <property type="entry name" value="TPPII_C_art"/>
</dbReference>
<dbReference type="InterPro" id="IPR046939">
    <property type="entry name" value="TPPII_C_sf"/>
</dbReference>
<dbReference type="InterPro" id="IPR048384">
    <property type="entry name" value="TPPII_GBD"/>
</dbReference>
<dbReference type="InterPro" id="IPR048383">
    <property type="entry name" value="TPPII_Ig-like-1"/>
</dbReference>
<dbReference type="InterPro" id="IPR022229">
    <property type="entry name" value="TPPII_Ig-like-2"/>
</dbReference>
<dbReference type="InterPro" id="IPR046940">
    <property type="entry name" value="TPPII_Ig-like_sf"/>
</dbReference>
<dbReference type="PANTHER" id="PTHR43806">
    <property type="entry name" value="PEPTIDASE S8"/>
    <property type="match status" value="1"/>
</dbReference>
<dbReference type="PANTHER" id="PTHR43806:SF14">
    <property type="entry name" value="TRIPEPTIDYL-PEPTIDASE 2"/>
    <property type="match status" value="1"/>
</dbReference>
<dbReference type="Pfam" id="PF00082">
    <property type="entry name" value="Peptidase_S8"/>
    <property type="match status" value="1"/>
</dbReference>
<dbReference type="Pfam" id="PF12580">
    <property type="entry name" value="TPPII"/>
    <property type="match status" value="1"/>
</dbReference>
<dbReference type="Pfam" id="PF12583">
    <property type="entry name" value="TPPII_C"/>
    <property type="match status" value="1"/>
</dbReference>
<dbReference type="Pfam" id="PF21316">
    <property type="entry name" value="TPPII_GBD"/>
    <property type="match status" value="1"/>
</dbReference>
<dbReference type="Pfam" id="PF21223">
    <property type="entry name" value="TPPII_Ig-like-1"/>
    <property type="match status" value="1"/>
</dbReference>
<dbReference type="PRINTS" id="PR00723">
    <property type="entry name" value="SUBTILISIN"/>
</dbReference>
<dbReference type="SUPFAM" id="SSF52743">
    <property type="entry name" value="Subtilisin-like"/>
    <property type="match status" value="1"/>
</dbReference>
<dbReference type="PROSITE" id="PS51892">
    <property type="entry name" value="SUBTILASE"/>
    <property type="match status" value="1"/>
</dbReference>
<dbReference type="PROSITE" id="PS00137">
    <property type="entry name" value="SUBTILASE_HIS"/>
    <property type="match status" value="1"/>
</dbReference>
<dbReference type="PROSITE" id="PS00138">
    <property type="entry name" value="SUBTILASE_SER"/>
    <property type="match status" value="1"/>
</dbReference>
<keyword id="KW-0031">Aminopeptidase</keyword>
<keyword id="KW-0378">Hydrolase</keyword>
<keyword id="KW-0645">Protease</keyword>
<keyword id="KW-1185">Reference proteome</keyword>
<keyword id="KW-0720">Serine protease</keyword>
<protein>
    <recommendedName>
        <fullName>Tripeptidyl-peptidase 2</fullName>
        <shortName>TPP2</shortName>
        <ecNumber evidence="2">3.4.14.10</ecNumber>
    </recommendedName>
    <alternativeName>
        <fullName>Tripeptidyl aminopeptidase</fullName>
    </alternativeName>
    <alternativeName>
        <fullName>Tripeptidyl peptidase II</fullName>
        <shortName>TPPII</shortName>
    </alternativeName>
</protein>
<comment type="function">
    <text evidence="1 4">Component of the proteolytic cascade acting downstream of the 26S proteasome in the ubiquitin-proteasome pathway (By similarity). Has a role in regulation of fat storage.</text>
</comment>
<comment type="catalytic activity">
    <reaction evidence="2">
        <text>Release of an N-terminal tripeptide from a polypeptide.</text>
        <dbReference type="EC" id="3.4.14.10"/>
    </reaction>
</comment>
<comment type="tissue specificity">
    <text evidence="4">Expressed in intestinal fat-storing cells and some head neurons.</text>
</comment>
<comment type="disruption phenotype">
    <text evidence="4">RNAi-mediated knockdown causes reduced fat storage but does not affect feeding behavior.</text>
</comment>
<comment type="similarity">
    <text evidence="5">Belongs to the peptidase S8 family.</text>
</comment>
<evidence type="ECO:0000250" key="1"/>
<evidence type="ECO:0000250" key="2">
    <source>
        <dbReference type="UniProtKB" id="P29144"/>
    </source>
</evidence>
<evidence type="ECO:0000255" key="3">
    <source>
        <dbReference type="PROSITE-ProRule" id="PRU01240"/>
    </source>
</evidence>
<evidence type="ECO:0000269" key="4">
    <source>
    </source>
</evidence>
<evidence type="ECO:0000305" key="5"/>
<feature type="chain" id="PRO_0000076427" description="Tripeptidyl-peptidase 2">
    <location>
        <begin position="1"/>
        <end position="1374"/>
    </location>
</feature>
<feature type="domain" description="Peptidase S8" evidence="3">
    <location>
        <begin position="62"/>
        <end position="558"/>
    </location>
</feature>
<feature type="active site" description="Charge relay system" evidence="3">
    <location>
        <position position="93"/>
    </location>
</feature>
<feature type="active site" description="Charge relay system" evidence="3">
    <location>
        <position position="314"/>
    </location>
</feature>
<feature type="active site" description="Charge relay system" evidence="3">
    <location>
        <position position="499"/>
    </location>
</feature>